<accession>Q39QR2</accession>
<proteinExistence type="inferred from homology"/>
<gene>
    <name evidence="1" type="primary">proA</name>
    <name type="ordered locus">Gmet_3199</name>
</gene>
<protein>
    <recommendedName>
        <fullName evidence="1">Gamma-glutamyl phosphate reductase</fullName>
        <shortName evidence="1">GPR</shortName>
        <ecNumber evidence="1">1.2.1.41</ecNumber>
    </recommendedName>
    <alternativeName>
        <fullName evidence="1">Glutamate-5-semialdehyde dehydrogenase</fullName>
    </alternativeName>
    <alternativeName>
        <fullName evidence="1">Glutamyl-gamma-semialdehyde dehydrogenase</fullName>
        <shortName evidence="1">GSA dehydrogenase</shortName>
    </alternativeName>
</protein>
<dbReference type="EC" id="1.2.1.41" evidence="1"/>
<dbReference type="EMBL" id="CP000148">
    <property type="protein sequence ID" value="ABB33412.1"/>
    <property type="molecule type" value="Genomic_DNA"/>
</dbReference>
<dbReference type="RefSeq" id="WP_004512637.1">
    <property type="nucleotide sequence ID" value="NC_007517.1"/>
</dbReference>
<dbReference type="SMR" id="Q39QR2"/>
<dbReference type="STRING" id="269799.Gmet_3199"/>
<dbReference type="KEGG" id="gme:Gmet_3199"/>
<dbReference type="eggNOG" id="COG0014">
    <property type="taxonomic scope" value="Bacteria"/>
</dbReference>
<dbReference type="HOGENOM" id="CLU_030231_0_0_7"/>
<dbReference type="UniPathway" id="UPA00098">
    <property type="reaction ID" value="UER00360"/>
</dbReference>
<dbReference type="Proteomes" id="UP000007073">
    <property type="component" value="Chromosome"/>
</dbReference>
<dbReference type="GO" id="GO:0005737">
    <property type="term" value="C:cytoplasm"/>
    <property type="evidence" value="ECO:0007669"/>
    <property type="project" value="UniProtKB-SubCell"/>
</dbReference>
<dbReference type="GO" id="GO:0004350">
    <property type="term" value="F:glutamate-5-semialdehyde dehydrogenase activity"/>
    <property type="evidence" value="ECO:0007669"/>
    <property type="project" value="UniProtKB-UniRule"/>
</dbReference>
<dbReference type="GO" id="GO:0050661">
    <property type="term" value="F:NADP binding"/>
    <property type="evidence" value="ECO:0007669"/>
    <property type="project" value="InterPro"/>
</dbReference>
<dbReference type="GO" id="GO:0055129">
    <property type="term" value="P:L-proline biosynthetic process"/>
    <property type="evidence" value="ECO:0007669"/>
    <property type="project" value="UniProtKB-UniRule"/>
</dbReference>
<dbReference type="CDD" id="cd07079">
    <property type="entry name" value="ALDH_F18-19_ProA-GPR"/>
    <property type="match status" value="1"/>
</dbReference>
<dbReference type="FunFam" id="3.40.309.10:FF:000006">
    <property type="entry name" value="Gamma-glutamyl phosphate reductase"/>
    <property type="match status" value="1"/>
</dbReference>
<dbReference type="Gene3D" id="3.40.605.10">
    <property type="entry name" value="Aldehyde Dehydrogenase, Chain A, domain 1"/>
    <property type="match status" value="1"/>
</dbReference>
<dbReference type="Gene3D" id="3.40.309.10">
    <property type="entry name" value="Aldehyde Dehydrogenase, Chain A, domain 2"/>
    <property type="match status" value="1"/>
</dbReference>
<dbReference type="HAMAP" id="MF_00412">
    <property type="entry name" value="ProA"/>
    <property type="match status" value="1"/>
</dbReference>
<dbReference type="InterPro" id="IPR016161">
    <property type="entry name" value="Ald_DH/histidinol_DH"/>
</dbReference>
<dbReference type="InterPro" id="IPR016163">
    <property type="entry name" value="Ald_DH_C"/>
</dbReference>
<dbReference type="InterPro" id="IPR016162">
    <property type="entry name" value="Ald_DH_N"/>
</dbReference>
<dbReference type="InterPro" id="IPR015590">
    <property type="entry name" value="Aldehyde_DH_dom"/>
</dbReference>
<dbReference type="InterPro" id="IPR020593">
    <property type="entry name" value="G-glutamylP_reductase_CS"/>
</dbReference>
<dbReference type="InterPro" id="IPR012134">
    <property type="entry name" value="Glu-5-SA_DH"/>
</dbReference>
<dbReference type="InterPro" id="IPR000965">
    <property type="entry name" value="GPR_dom"/>
</dbReference>
<dbReference type="NCBIfam" id="NF001221">
    <property type="entry name" value="PRK00197.1"/>
    <property type="match status" value="1"/>
</dbReference>
<dbReference type="NCBIfam" id="TIGR00407">
    <property type="entry name" value="proA"/>
    <property type="match status" value="1"/>
</dbReference>
<dbReference type="PANTHER" id="PTHR11063:SF8">
    <property type="entry name" value="DELTA-1-PYRROLINE-5-CARBOXYLATE SYNTHASE"/>
    <property type="match status" value="1"/>
</dbReference>
<dbReference type="PANTHER" id="PTHR11063">
    <property type="entry name" value="GLUTAMATE SEMIALDEHYDE DEHYDROGENASE"/>
    <property type="match status" value="1"/>
</dbReference>
<dbReference type="Pfam" id="PF00171">
    <property type="entry name" value="Aldedh"/>
    <property type="match status" value="1"/>
</dbReference>
<dbReference type="PIRSF" id="PIRSF000151">
    <property type="entry name" value="GPR"/>
    <property type="match status" value="1"/>
</dbReference>
<dbReference type="SUPFAM" id="SSF53720">
    <property type="entry name" value="ALDH-like"/>
    <property type="match status" value="1"/>
</dbReference>
<dbReference type="PROSITE" id="PS01223">
    <property type="entry name" value="PROA"/>
    <property type="match status" value="1"/>
</dbReference>
<name>PROA_GEOMG</name>
<sequence>MTIAEQIRTIAADARQAAIAMAKLPTTAKNDLLMAMAMALISNTPHLIDENRKDLEAGEKKGLSSAMLDRLMLDEARIKAMADGLREVAGLPDPVGEVTRMWKRPNNLMVGKMRIPLGVIGIIYEARPNVTADAAALCLKAGNSVILRGGSEAIHSNLAIARILGEEMERAGIPKAALSVIPFPEREGVLEMLKQEEFIDLIIPRGGESLIRFVVEHSKIPVIKHYKGVCHVFVDASADFDMAERIVVNAKVQRPGVCNALETLLIHKDVAEAFIPRIAATLTDLKVELRGDDCVRQFAPQAKKATEEDWQAEYLELILAVRVVDGLNEAIDHINAYGSLHTEAIVTRDYHNSQRFIREVNSSTVLVNASTRFADGNQLGLGAEIGISTTKLHSFGPMGLEDLTTTKFIVYGDGQVRQ</sequence>
<reference key="1">
    <citation type="journal article" date="2009" name="BMC Microbiol.">
        <title>The genome sequence of Geobacter metallireducens: features of metabolism, physiology and regulation common and dissimilar to Geobacter sulfurreducens.</title>
        <authorList>
            <person name="Aklujkar M."/>
            <person name="Krushkal J."/>
            <person name="DiBartolo G."/>
            <person name="Lapidus A."/>
            <person name="Land M.L."/>
            <person name="Lovley D.R."/>
        </authorList>
    </citation>
    <scope>NUCLEOTIDE SEQUENCE [LARGE SCALE GENOMIC DNA]</scope>
    <source>
        <strain>ATCC 53774 / DSM 7210 / GS-15</strain>
    </source>
</reference>
<keyword id="KW-0028">Amino-acid biosynthesis</keyword>
<keyword id="KW-0963">Cytoplasm</keyword>
<keyword id="KW-0521">NADP</keyword>
<keyword id="KW-0560">Oxidoreductase</keyword>
<keyword id="KW-0641">Proline biosynthesis</keyword>
<keyword id="KW-1185">Reference proteome</keyword>
<comment type="function">
    <text evidence="1">Catalyzes the NADPH-dependent reduction of L-glutamate 5-phosphate into L-glutamate 5-semialdehyde and phosphate. The product spontaneously undergoes cyclization to form 1-pyrroline-5-carboxylate.</text>
</comment>
<comment type="catalytic activity">
    <reaction evidence="1">
        <text>L-glutamate 5-semialdehyde + phosphate + NADP(+) = L-glutamyl 5-phosphate + NADPH + H(+)</text>
        <dbReference type="Rhea" id="RHEA:19541"/>
        <dbReference type="ChEBI" id="CHEBI:15378"/>
        <dbReference type="ChEBI" id="CHEBI:43474"/>
        <dbReference type="ChEBI" id="CHEBI:57783"/>
        <dbReference type="ChEBI" id="CHEBI:58066"/>
        <dbReference type="ChEBI" id="CHEBI:58274"/>
        <dbReference type="ChEBI" id="CHEBI:58349"/>
        <dbReference type="EC" id="1.2.1.41"/>
    </reaction>
</comment>
<comment type="pathway">
    <text evidence="1">Amino-acid biosynthesis; L-proline biosynthesis; L-glutamate 5-semialdehyde from L-glutamate: step 2/2.</text>
</comment>
<comment type="subcellular location">
    <subcellularLocation>
        <location evidence="1">Cytoplasm</location>
    </subcellularLocation>
</comment>
<comment type="similarity">
    <text evidence="1">Belongs to the gamma-glutamyl phosphate reductase family.</text>
</comment>
<feature type="chain" id="PRO_0000230004" description="Gamma-glutamyl phosphate reductase">
    <location>
        <begin position="1"/>
        <end position="418"/>
    </location>
</feature>
<organism>
    <name type="scientific">Geobacter metallireducens (strain ATCC 53774 / DSM 7210 / GS-15)</name>
    <dbReference type="NCBI Taxonomy" id="269799"/>
    <lineage>
        <taxon>Bacteria</taxon>
        <taxon>Pseudomonadati</taxon>
        <taxon>Thermodesulfobacteriota</taxon>
        <taxon>Desulfuromonadia</taxon>
        <taxon>Geobacterales</taxon>
        <taxon>Geobacteraceae</taxon>
        <taxon>Geobacter</taxon>
    </lineage>
</organism>
<evidence type="ECO:0000255" key="1">
    <source>
        <dbReference type="HAMAP-Rule" id="MF_00412"/>
    </source>
</evidence>